<organism>
    <name type="scientific">Meyerozyma guilliermondii (strain ATCC 6260 / CBS 566 / DSM 6381 / JCM 1539 / NBRC 10279 / NRRL Y-324)</name>
    <name type="common">Yeast</name>
    <name type="synonym">Candida guilliermondii</name>
    <dbReference type="NCBI Taxonomy" id="294746"/>
    <lineage>
        <taxon>Eukaryota</taxon>
        <taxon>Fungi</taxon>
        <taxon>Dikarya</taxon>
        <taxon>Ascomycota</taxon>
        <taxon>Saccharomycotina</taxon>
        <taxon>Pichiomycetes</taxon>
        <taxon>Debaryomycetaceae</taxon>
        <taxon>Meyerozyma</taxon>
    </lineage>
</organism>
<evidence type="ECO:0000250" key="1"/>
<evidence type="ECO:0000255" key="2"/>
<evidence type="ECO:0000255" key="3">
    <source>
        <dbReference type="PROSITE-ProRule" id="PRU00836"/>
    </source>
</evidence>
<evidence type="ECO:0000256" key="4">
    <source>
        <dbReference type="SAM" id="MobiDB-lite"/>
    </source>
</evidence>
<evidence type="ECO:0000305" key="5"/>
<sequence>MDIIQKMVFKSKQQPLVPIGALATTGAIILASKSIRRGDRIKTQIYFRYRIGFQLLTLVALVAGGLYYQTETAQQKQTREEKLRDKAKLREKLWIEELERRDAVIQERKKRLEESKAELLEVAQQGFEEARETETREAQLKKEEIEEKEN</sequence>
<proteinExistence type="inferred from homology"/>
<gene>
    <name type="primary">RCF1</name>
    <name type="synonym">AIM31</name>
    <name type="ORF">PGUG_02673</name>
</gene>
<comment type="function">
    <text evidence="1">Cytochrome c oxidase subunit which plays a role in assembly of respiratory supercomplexes.</text>
</comment>
<comment type="subunit">
    <text evidence="1">Associates with the respiratory chain complex III/complex IV supercomplex.</text>
</comment>
<comment type="subcellular location">
    <subcellularLocation>
        <location evidence="3">Mitochondrion membrane</location>
        <topology evidence="3">Multi-pass membrane protein</topology>
    </subcellularLocation>
</comment>
<comment type="similarity">
    <text evidence="5">Belongs to the RCF1 family.</text>
</comment>
<protein>
    <recommendedName>
        <fullName>Respiratory supercomplex factor 1, mitochondrial</fullName>
    </recommendedName>
</protein>
<keyword id="KW-0175">Coiled coil</keyword>
<keyword id="KW-0472">Membrane</keyword>
<keyword id="KW-0496">Mitochondrion</keyword>
<keyword id="KW-1185">Reference proteome</keyword>
<keyword id="KW-0812">Transmembrane</keyword>
<keyword id="KW-1133">Transmembrane helix</keyword>
<name>RCF1_PICGU</name>
<dbReference type="EMBL" id="CH408157">
    <property type="protein sequence ID" value="EDK38575.1"/>
    <property type="molecule type" value="Genomic_DNA"/>
</dbReference>
<dbReference type="RefSeq" id="XP_001484944.1">
    <property type="nucleotide sequence ID" value="XM_001484894.1"/>
</dbReference>
<dbReference type="SMR" id="A5DHC2"/>
<dbReference type="FunCoup" id="A5DHC2">
    <property type="interactions" value="84"/>
</dbReference>
<dbReference type="STRING" id="294746.A5DHC2"/>
<dbReference type="GeneID" id="5126646"/>
<dbReference type="KEGG" id="pgu:PGUG_02673"/>
<dbReference type="VEuPathDB" id="FungiDB:PGUG_02673"/>
<dbReference type="eggNOG" id="KOG4431">
    <property type="taxonomic scope" value="Eukaryota"/>
</dbReference>
<dbReference type="HOGENOM" id="CLU_087356_1_0_1"/>
<dbReference type="InParanoid" id="A5DHC2"/>
<dbReference type="OMA" id="QRWIREL"/>
<dbReference type="OrthoDB" id="6604018at2759"/>
<dbReference type="Proteomes" id="UP000001997">
    <property type="component" value="Unassembled WGS sequence"/>
</dbReference>
<dbReference type="GO" id="GO:0005743">
    <property type="term" value="C:mitochondrial inner membrane"/>
    <property type="evidence" value="ECO:0007669"/>
    <property type="project" value="EnsemblFungi"/>
</dbReference>
<dbReference type="GO" id="GO:0098803">
    <property type="term" value="C:respiratory chain complex"/>
    <property type="evidence" value="ECO:0007669"/>
    <property type="project" value="EnsemblFungi"/>
</dbReference>
<dbReference type="GO" id="GO:0033617">
    <property type="term" value="P:mitochondrial cytochrome c oxidase assembly"/>
    <property type="evidence" value="ECO:0007669"/>
    <property type="project" value="EnsemblFungi"/>
</dbReference>
<dbReference type="GO" id="GO:0097250">
    <property type="term" value="P:mitochondrial respirasome assembly"/>
    <property type="evidence" value="ECO:0007669"/>
    <property type="project" value="EnsemblFungi"/>
</dbReference>
<dbReference type="GO" id="GO:0010155">
    <property type="term" value="P:regulation of proton transport"/>
    <property type="evidence" value="ECO:0007669"/>
    <property type="project" value="EnsemblFungi"/>
</dbReference>
<dbReference type="Gene3D" id="6.10.140.1320">
    <property type="match status" value="1"/>
</dbReference>
<dbReference type="InterPro" id="IPR007667">
    <property type="entry name" value="Hypoxia_induced_domain"/>
</dbReference>
<dbReference type="InterPro" id="IPR050355">
    <property type="entry name" value="RCF1"/>
</dbReference>
<dbReference type="PANTHER" id="PTHR12297:SF3">
    <property type="entry name" value="HIG1 DOMAIN FAMILY MEMBER 1A"/>
    <property type="match status" value="1"/>
</dbReference>
<dbReference type="PANTHER" id="PTHR12297">
    <property type="entry name" value="HYPOXIA-INDUCBILE GENE 1 HIG1 -RELATED"/>
    <property type="match status" value="1"/>
</dbReference>
<dbReference type="Pfam" id="PF04588">
    <property type="entry name" value="HIG_1_N"/>
    <property type="match status" value="1"/>
</dbReference>
<dbReference type="PROSITE" id="PS51503">
    <property type="entry name" value="HIG1"/>
    <property type="match status" value="1"/>
</dbReference>
<feature type="chain" id="PRO_0000399649" description="Respiratory supercomplex factor 1, mitochondrial">
    <location>
        <begin position="1"/>
        <end position="150"/>
    </location>
</feature>
<feature type="transmembrane region" description="Helical" evidence="3">
    <location>
        <begin position="15"/>
        <end position="32"/>
    </location>
</feature>
<feature type="transmembrane region" description="Helical" evidence="3">
    <location>
        <begin position="45"/>
        <end position="67"/>
    </location>
</feature>
<feature type="domain" description="HIG1" evidence="3">
    <location>
        <begin position="1"/>
        <end position="79"/>
    </location>
</feature>
<feature type="region of interest" description="Disordered" evidence="4">
    <location>
        <begin position="126"/>
        <end position="150"/>
    </location>
</feature>
<feature type="coiled-coil region" evidence="2">
    <location>
        <begin position="71"/>
        <end position="150"/>
    </location>
</feature>
<feature type="compositionally biased region" description="Basic and acidic residues" evidence="4">
    <location>
        <begin position="128"/>
        <end position="150"/>
    </location>
</feature>
<accession>A5DHC2</accession>
<reference key="1">
    <citation type="journal article" date="2009" name="Nature">
        <title>Evolution of pathogenicity and sexual reproduction in eight Candida genomes.</title>
        <authorList>
            <person name="Butler G."/>
            <person name="Rasmussen M.D."/>
            <person name="Lin M.F."/>
            <person name="Santos M.A.S."/>
            <person name="Sakthikumar S."/>
            <person name="Munro C.A."/>
            <person name="Rheinbay E."/>
            <person name="Grabherr M."/>
            <person name="Forche A."/>
            <person name="Reedy J.L."/>
            <person name="Agrafioti I."/>
            <person name="Arnaud M.B."/>
            <person name="Bates S."/>
            <person name="Brown A.J.P."/>
            <person name="Brunke S."/>
            <person name="Costanzo M.C."/>
            <person name="Fitzpatrick D.A."/>
            <person name="de Groot P.W.J."/>
            <person name="Harris D."/>
            <person name="Hoyer L.L."/>
            <person name="Hube B."/>
            <person name="Klis F.M."/>
            <person name="Kodira C."/>
            <person name="Lennard N."/>
            <person name="Logue M.E."/>
            <person name="Martin R."/>
            <person name="Neiman A.M."/>
            <person name="Nikolaou E."/>
            <person name="Quail M.A."/>
            <person name="Quinn J."/>
            <person name="Santos M.C."/>
            <person name="Schmitzberger F.F."/>
            <person name="Sherlock G."/>
            <person name="Shah P."/>
            <person name="Silverstein K.A.T."/>
            <person name="Skrzypek M.S."/>
            <person name="Soll D."/>
            <person name="Staggs R."/>
            <person name="Stansfield I."/>
            <person name="Stumpf M.P.H."/>
            <person name="Sudbery P.E."/>
            <person name="Srikantha T."/>
            <person name="Zeng Q."/>
            <person name="Berman J."/>
            <person name="Berriman M."/>
            <person name="Heitman J."/>
            <person name="Gow N.A.R."/>
            <person name="Lorenz M.C."/>
            <person name="Birren B.W."/>
            <person name="Kellis M."/>
            <person name="Cuomo C.A."/>
        </authorList>
    </citation>
    <scope>NUCLEOTIDE SEQUENCE [LARGE SCALE GENOMIC DNA]</scope>
    <source>
        <strain>ATCC 6260 / CBS 566 / DSM 6381 / JCM 1539 / NBRC 10279 / NRRL Y-324</strain>
    </source>
</reference>